<sequence>MKLLYTDIRTSLTEILTREAEELVAAGKRVFYIAPNSLSFEKERAVLECLSQQASFSITVTRFAQMARYLVLNDLPVKTTLDDIGLGLAFYKCLAELDPKDLRVYGAIKQDPQLIQQLIELYHEMTKSQMSFLDLENLTDEDKRTDLLLIFEKVTAYLNQGQLAQGSQLSHLIEAIENDKVSSDFNQITLVIDGFTRFSAEEERVVDLLHGKGVEIVIGAYASKKAYTSPFSEGNLYQASVKFLHHLASKYQTPAQDCSQTHEKMDSFDKASRLLESSYDFSELALDVDEKDRENLQIWSCLTQKEELELVARSIRQKLHENSDLSYKHFRILLGDVASYQLSLKTIFDQYQIPFYLGRSEAMAHHPLTQFVESILALKRYRFRQEDLINLLRTDLYTDLSQSDIDAFEQYIRYLGINGLPAFQQIFTKSHHGKFNLERLNVLRLRILAPLETLFASRKQKAENLLQKWSVFLKEGAVTKQLQDLTTTLEAVEQERQAEVWKAFCHVLEQFATVFAGSQVSLEDFLALLHSGMSLSQYRTIPATVDTVLVQSYDLIAPLTADFVYAIGLTQDNLPKISQNTSLLTDEERQNLNQATEEGVQLLIASSENLKKNRYTMLSLVNSARKQLFLSAPSLFNESESKESAYLQELIHFGFRRREKRMNHKGLSKEDMGSYHSLLSSLVAYHQQGEMSDTEQDLTFVKVLSRVIGKKLDLQGLENPAIPTSPSSKTLAKDTLQALYPAKQEFYLSTSGLTEFYRNEYSYFLRYVLGLQEELRLRPDARSHGNFLHRIFERALQLPNEDSFDQRLEQAIQETSQEREFEAIYQESLEAQFTKEVLLDVARTTGHILRHNPAIETIKEEANFGGKDQAFIQLDNGRSVFVRGKVDRIDRLKANGAIGVVDYKSSLTQFQFPHFFNGLNSQLPTYLAALKREGEQNFFGAMYLEMAEPVQSLMAVKSLAGAVVEASKSMKYQGLFLEKESSYLGEFYNKNKANQLTDEEFQLLLDYNAYLYKKAAEKILAGRFAINPYTENGRSIAPYVQQHQAITGFEANYHLGQARFLEKLDLADGKRLVGEKLKQAWFEKIREELNR</sequence>
<name>ADDB_STRP4</name>
<feature type="chain" id="PRO_0000379399" description="ATP-dependent helicase/deoxyribonuclease subunit B">
    <location>
        <begin position="1"/>
        <end position="1091"/>
    </location>
</feature>
<proteinExistence type="inferred from homology"/>
<reference key="1">
    <citation type="journal article" date="2001" name="Microb. Drug Resist.">
        <title>Annotated draft genomic sequence from a Streptococcus pneumoniae type 19F clinical isolate.</title>
        <authorList>
            <person name="Dopazo J."/>
            <person name="Mendoza A."/>
            <person name="Herrero J."/>
            <person name="Caldara F."/>
            <person name="Humbert Y."/>
            <person name="Friedli L."/>
            <person name="Guerrier M."/>
            <person name="Grand-Schenk E."/>
            <person name="Gandin C."/>
            <person name="de Francesco M."/>
            <person name="Polissi A."/>
            <person name="Buell G."/>
            <person name="Feger G."/>
            <person name="Garcia E."/>
            <person name="Peitsch M."/>
            <person name="Garcia-Bustos J.F."/>
        </authorList>
    </citation>
    <scope>NUCLEOTIDE SEQUENCE [LARGE SCALE GENOMIC DNA]</scope>
    <source>
        <strain>G54</strain>
    </source>
</reference>
<reference key="2">
    <citation type="submission" date="2008-03" db="EMBL/GenBank/DDBJ databases">
        <title>Pneumococcal beta glucoside metabolism investigated by whole genome comparison.</title>
        <authorList>
            <person name="Mulas L."/>
            <person name="Trappetti C."/>
            <person name="Hakenbeck R."/>
            <person name="Iannelli F."/>
            <person name="Pozzi G."/>
            <person name="Davidsen T.M."/>
            <person name="Tettelin H."/>
            <person name="Oggioni M."/>
        </authorList>
    </citation>
    <scope>NUCLEOTIDE SEQUENCE [LARGE SCALE GENOMIC DNA]</scope>
    <source>
        <strain>G54</strain>
    </source>
</reference>
<keyword id="KW-0067">ATP-binding</keyword>
<keyword id="KW-0227">DNA damage</keyword>
<keyword id="KW-0234">DNA repair</keyword>
<keyword id="KW-0238">DNA-binding</keyword>
<keyword id="KW-0269">Exonuclease</keyword>
<keyword id="KW-0347">Helicase</keyword>
<keyword id="KW-0378">Hydrolase</keyword>
<keyword id="KW-0540">Nuclease</keyword>
<keyword id="KW-0547">Nucleotide-binding</keyword>
<organism>
    <name type="scientific">Streptococcus pneumoniae serotype 19F (strain G54)</name>
    <dbReference type="NCBI Taxonomy" id="512566"/>
    <lineage>
        <taxon>Bacteria</taxon>
        <taxon>Bacillati</taxon>
        <taxon>Bacillota</taxon>
        <taxon>Bacilli</taxon>
        <taxon>Lactobacillales</taxon>
        <taxon>Streptococcaceae</taxon>
        <taxon>Streptococcus</taxon>
    </lineage>
</organism>
<comment type="function">
    <text evidence="1">The heterodimer acts as both an ATP-dependent DNA helicase and an ATP-dependent, dual-direction single-stranded exonuclease. Recognizes the chi site generating a DNA molecule suitable for the initiation of homologous recombination. This subunit has 5' -&gt; 3' nuclease activity but not helicase activity.</text>
</comment>
<comment type="cofactor">
    <cofactor evidence="1">
        <name>Mg(2+)</name>
        <dbReference type="ChEBI" id="CHEBI:18420"/>
    </cofactor>
</comment>
<comment type="subunit">
    <text evidence="1">Heterodimer of AddA and RexB.</text>
</comment>
<comment type="miscellaneous">
    <text evidence="1">Despite having helicase-like domains, this subunit does not have helicase activity.</text>
</comment>
<comment type="similarity">
    <text evidence="1">Belongs to the helicase family. AddB/RexB type 2 subfamily.</text>
</comment>
<accession>B5E4P4</accession>
<dbReference type="EC" id="3.1.-.-" evidence="1"/>
<dbReference type="EMBL" id="CP001015">
    <property type="protein sequence ID" value="ACF55246.1"/>
    <property type="molecule type" value="Genomic_DNA"/>
</dbReference>
<dbReference type="SMR" id="B5E4P4"/>
<dbReference type="KEGG" id="spx:SPG_1050"/>
<dbReference type="HOGENOM" id="CLU_007838_0_0_9"/>
<dbReference type="GO" id="GO:0008409">
    <property type="term" value="F:5'-3' exonuclease activity"/>
    <property type="evidence" value="ECO:0007669"/>
    <property type="project" value="UniProtKB-UniRule"/>
</dbReference>
<dbReference type="GO" id="GO:0005524">
    <property type="term" value="F:ATP binding"/>
    <property type="evidence" value="ECO:0007669"/>
    <property type="project" value="UniProtKB-UniRule"/>
</dbReference>
<dbReference type="GO" id="GO:0003690">
    <property type="term" value="F:double-stranded DNA binding"/>
    <property type="evidence" value="ECO:0007669"/>
    <property type="project" value="UniProtKB-UniRule"/>
</dbReference>
<dbReference type="GO" id="GO:0004386">
    <property type="term" value="F:helicase activity"/>
    <property type="evidence" value="ECO:0007669"/>
    <property type="project" value="UniProtKB-KW"/>
</dbReference>
<dbReference type="GO" id="GO:0016817">
    <property type="term" value="F:hydrolase activity, acting on acid anhydrides"/>
    <property type="evidence" value="ECO:0007669"/>
    <property type="project" value="InterPro"/>
</dbReference>
<dbReference type="GO" id="GO:0000724">
    <property type="term" value="P:double-strand break repair via homologous recombination"/>
    <property type="evidence" value="ECO:0007669"/>
    <property type="project" value="UniProtKB-UniRule"/>
</dbReference>
<dbReference type="FunFam" id="3.40.50.300:FF:002666">
    <property type="entry name" value="ATP-dependent helicase/deoxyribonuclease subunit B"/>
    <property type="match status" value="1"/>
</dbReference>
<dbReference type="FunFam" id="3.40.50.300:FF:002815">
    <property type="entry name" value="ATP-dependent helicase/deoxyribonuclease subunit B"/>
    <property type="match status" value="1"/>
</dbReference>
<dbReference type="Gene3D" id="3.40.50.300">
    <property type="entry name" value="P-loop containing nucleotide triphosphate hydrolases"/>
    <property type="match status" value="3"/>
</dbReference>
<dbReference type="HAMAP" id="MF_01453">
    <property type="entry name" value="AddB_type2"/>
    <property type="match status" value="1"/>
</dbReference>
<dbReference type="InterPro" id="IPR049035">
    <property type="entry name" value="ADDB_N"/>
</dbReference>
<dbReference type="InterPro" id="IPR014141">
    <property type="entry name" value="DNA_helicase_suRexB"/>
</dbReference>
<dbReference type="InterPro" id="IPR027417">
    <property type="entry name" value="P-loop_NTPase"/>
</dbReference>
<dbReference type="InterPro" id="IPR038726">
    <property type="entry name" value="PDDEXK_AddAB-type"/>
</dbReference>
<dbReference type="InterPro" id="IPR011335">
    <property type="entry name" value="Restrct_endonuc-II-like"/>
</dbReference>
<dbReference type="NCBIfam" id="TIGR02774">
    <property type="entry name" value="rexB_recomb"/>
    <property type="match status" value="1"/>
</dbReference>
<dbReference type="PANTHER" id="PTHR30591">
    <property type="entry name" value="RECBCD ENZYME SUBUNIT RECC"/>
    <property type="match status" value="1"/>
</dbReference>
<dbReference type="PANTHER" id="PTHR30591:SF1">
    <property type="entry name" value="RECBCD ENZYME SUBUNIT RECC"/>
    <property type="match status" value="1"/>
</dbReference>
<dbReference type="Pfam" id="PF21445">
    <property type="entry name" value="ADDB_N"/>
    <property type="match status" value="1"/>
</dbReference>
<dbReference type="Pfam" id="PF12705">
    <property type="entry name" value="PDDEXK_1"/>
    <property type="match status" value="1"/>
</dbReference>
<dbReference type="SUPFAM" id="SSF52540">
    <property type="entry name" value="P-loop containing nucleoside triphosphate hydrolases"/>
    <property type="match status" value="1"/>
</dbReference>
<dbReference type="SUPFAM" id="SSF52980">
    <property type="entry name" value="Restriction endonuclease-like"/>
    <property type="match status" value="1"/>
</dbReference>
<evidence type="ECO:0000255" key="1">
    <source>
        <dbReference type="HAMAP-Rule" id="MF_01453"/>
    </source>
</evidence>
<gene>
    <name evidence="1" type="primary">rexB</name>
    <name type="ordered locus">SPG_1050</name>
</gene>
<protein>
    <recommendedName>
        <fullName evidence="1">ATP-dependent helicase/deoxyribonuclease subunit B</fullName>
        <ecNumber evidence="1">3.1.-.-</ecNumber>
    </recommendedName>
    <alternativeName>
        <fullName evidence="1">ATP-dependent helicase/nuclease subunit RexB</fullName>
    </alternativeName>
</protein>